<name>HTPX_HYDCU</name>
<organism>
    <name type="scientific">Hydrogenovibrio crunogenus (strain DSM 25203 / XCL-2)</name>
    <name type="common">Thiomicrospira crunogena</name>
    <dbReference type="NCBI Taxonomy" id="317025"/>
    <lineage>
        <taxon>Bacteria</taxon>
        <taxon>Pseudomonadati</taxon>
        <taxon>Pseudomonadota</taxon>
        <taxon>Gammaproteobacteria</taxon>
        <taxon>Thiotrichales</taxon>
        <taxon>Piscirickettsiaceae</taxon>
        <taxon>Hydrogenovibrio</taxon>
    </lineage>
</organism>
<sequence>MKRIGLFLLTNIAVLAVAMITMNLLGVGSYMQGTSLDLGNLFAFAAIIGFAGSFVSLAMSKWLAKMSVGAKVIKEPRNADEQWLVETVRRQAEKAGIGMPEVAIYEGAEPNAFATGMTKNSALVAVSTGLLRHMRQNEVEAVLGHEVAHIANGDMVTMALLQGVVNTFVIFFAKIVAYVVDRVVLKNESEGHSITFIVVDIVAQILFGILASMITMWFSRKREFHADNGGAYLAGKENMIAALQRLQTMQPGELPDQMAAFGISARPSNIGDLFRSHPPLEKRIEALRATTQDQLKVA</sequence>
<keyword id="KW-0997">Cell inner membrane</keyword>
<keyword id="KW-1003">Cell membrane</keyword>
<keyword id="KW-0378">Hydrolase</keyword>
<keyword id="KW-0472">Membrane</keyword>
<keyword id="KW-0479">Metal-binding</keyword>
<keyword id="KW-0482">Metalloprotease</keyword>
<keyword id="KW-0645">Protease</keyword>
<keyword id="KW-0346">Stress response</keyword>
<keyword id="KW-0812">Transmembrane</keyword>
<keyword id="KW-1133">Transmembrane helix</keyword>
<keyword id="KW-0862">Zinc</keyword>
<dbReference type="EC" id="3.4.24.-" evidence="1"/>
<dbReference type="EMBL" id="CP000109">
    <property type="protein sequence ID" value="ABB42218.1"/>
    <property type="molecule type" value="Genomic_DNA"/>
</dbReference>
<dbReference type="SMR" id="Q31F55"/>
<dbReference type="STRING" id="317025.Tcr_1626"/>
<dbReference type="MEROPS" id="M48.002"/>
<dbReference type="KEGG" id="tcx:Tcr_1626"/>
<dbReference type="eggNOG" id="COG0501">
    <property type="taxonomic scope" value="Bacteria"/>
</dbReference>
<dbReference type="HOGENOM" id="CLU_042266_1_0_6"/>
<dbReference type="OrthoDB" id="15218at2"/>
<dbReference type="GO" id="GO:0005886">
    <property type="term" value="C:plasma membrane"/>
    <property type="evidence" value="ECO:0007669"/>
    <property type="project" value="UniProtKB-SubCell"/>
</dbReference>
<dbReference type="GO" id="GO:0004222">
    <property type="term" value="F:metalloendopeptidase activity"/>
    <property type="evidence" value="ECO:0007669"/>
    <property type="project" value="UniProtKB-UniRule"/>
</dbReference>
<dbReference type="GO" id="GO:0008270">
    <property type="term" value="F:zinc ion binding"/>
    <property type="evidence" value="ECO:0007669"/>
    <property type="project" value="UniProtKB-UniRule"/>
</dbReference>
<dbReference type="GO" id="GO:0006508">
    <property type="term" value="P:proteolysis"/>
    <property type="evidence" value="ECO:0007669"/>
    <property type="project" value="UniProtKB-KW"/>
</dbReference>
<dbReference type="CDD" id="cd07335">
    <property type="entry name" value="M48B_HtpX_like"/>
    <property type="match status" value="1"/>
</dbReference>
<dbReference type="Gene3D" id="3.30.2010.10">
    <property type="entry name" value="Metalloproteases ('zincins'), catalytic domain"/>
    <property type="match status" value="1"/>
</dbReference>
<dbReference type="HAMAP" id="MF_00188">
    <property type="entry name" value="Pept_M48_protease_HtpX"/>
    <property type="match status" value="1"/>
</dbReference>
<dbReference type="InterPro" id="IPR050083">
    <property type="entry name" value="HtpX_protease"/>
</dbReference>
<dbReference type="InterPro" id="IPR022919">
    <property type="entry name" value="Pept_M48_protease_HtpX"/>
</dbReference>
<dbReference type="InterPro" id="IPR001915">
    <property type="entry name" value="Peptidase_M48"/>
</dbReference>
<dbReference type="NCBIfam" id="NF003965">
    <property type="entry name" value="PRK05457.1"/>
    <property type="match status" value="1"/>
</dbReference>
<dbReference type="PANTHER" id="PTHR43221">
    <property type="entry name" value="PROTEASE HTPX"/>
    <property type="match status" value="1"/>
</dbReference>
<dbReference type="PANTHER" id="PTHR43221:SF1">
    <property type="entry name" value="PROTEASE HTPX"/>
    <property type="match status" value="1"/>
</dbReference>
<dbReference type="Pfam" id="PF01435">
    <property type="entry name" value="Peptidase_M48"/>
    <property type="match status" value="1"/>
</dbReference>
<reference key="1">
    <citation type="journal article" date="2006" name="PLoS Biol.">
        <title>The genome of deep-sea vent chemolithoautotroph Thiomicrospira crunogena XCL-2.</title>
        <authorList>
            <person name="Scott K.M."/>
            <person name="Sievert S.M."/>
            <person name="Abril F.N."/>
            <person name="Ball L.A."/>
            <person name="Barrett C.J."/>
            <person name="Blake R.A."/>
            <person name="Boller A.J."/>
            <person name="Chain P.S.G."/>
            <person name="Clark J.A."/>
            <person name="Davis C.R."/>
            <person name="Detter C."/>
            <person name="Do K.F."/>
            <person name="Dobrinski K.P."/>
            <person name="Faza B.I."/>
            <person name="Fitzpatrick K.A."/>
            <person name="Freyermuth S.K."/>
            <person name="Harmer T.L."/>
            <person name="Hauser L.J."/>
            <person name="Huegler M."/>
            <person name="Kerfeld C.A."/>
            <person name="Klotz M.G."/>
            <person name="Kong W.W."/>
            <person name="Land M."/>
            <person name="Lapidus A."/>
            <person name="Larimer F.W."/>
            <person name="Longo D.L."/>
            <person name="Lucas S."/>
            <person name="Malfatti S.A."/>
            <person name="Massey S.E."/>
            <person name="Martin D.D."/>
            <person name="McCuddin Z."/>
            <person name="Meyer F."/>
            <person name="Moore J.L."/>
            <person name="Ocampo L.H. Jr."/>
            <person name="Paul J.H."/>
            <person name="Paulsen I.T."/>
            <person name="Reep D.K."/>
            <person name="Ren Q."/>
            <person name="Ross R.L."/>
            <person name="Sato P.Y."/>
            <person name="Thomas P."/>
            <person name="Tinkham L.E."/>
            <person name="Zeruth G.T."/>
        </authorList>
    </citation>
    <scope>NUCLEOTIDE SEQUENCE [LARGE SCALE GENOMIC DNA]</scope>
    <source>
        <strain>DSM 25203 / XCL-2</strain>
    </source>
</reference>
<evidence type="ECO:0000255" key="1">
    <source>
        <dbReference type="HAMAP-Rule" id="MF_00188"/>
    </source>
</evidence>
<gene>
    <name evidence="1" type="primary">htpX</name>
    <name type="ordered locus">Tcr_1626</name>
</gene>
<accession>Q31F55</accession>
<feature type="chain" id="PRO_1000020961" description="Protease HtpX">
    <location>
        <begin position="1"/>
        <end position="298"/>
    </location>
</feature>
<feature type="transmembrane region" description="Helical" evidence="1">
    <location>
        <begin position="4"/>
        <end position="24"/>
    </location>
</feature>
<feature type="transmembrane region" description="Helical" evidence="1">
    <location>
        <begin position="38"/>
        <end position="58"/>
    </location>
</feature>
<feature type="transmembrane region" description="Helical" evidence="1">
    <location>
        <begin position="160"/>
        <end position="180"/>
    </location>
</feature>
<feature type="transmembrane region" description="Helical" evidence="1">
    <location>
        <begin position="194"/>
        <end position="214"/>
    </location>
</feature>
<feature type="active site" evidence="1">
    <location>
        <position position="146"/>
    </location>
</feature>
<feature type="binding site" evidence="1">
    <location>
        <position position="145"/>
    </location>
    <ligand>
        <name>Zn(2+)</name>
        <dbReference type="ChEBI" id="CHEBI:29105"/>
        <note>catalytic</note>
    </ligand>
</feature>
<feature type="binding site" evidence="1">
    <location>
        <position position="149"/>
    </location>
    <ligand>
        <name>Zn(2+)</name>
        <dbReference type="ChEBI" id="CHEBI:29105"/>
        <note>catalytic</note>
    </ligand>
</feature>
<feature type="binding site" evidence="1">
    <location>
        <position position="223"/>
    </location>
    <ligand>
        <name>Zn(2+)</name>
        <dbReference type="ChEBI" id="CHEBI:29105"/>
        <note>catalytic</note>
    </ligand>
</feature>
<comment type="cofactor">
    <cofactor evidence="1">
        <name>Zn(2+)</name>
        <dbReference type="ChEBI" id="CHEBI:29105"/>
    </cofactor>
    <text evidence="1">Binds 1 zinc ion per subunit.</text>
</comment>
<comment type="subcellular location">
    <subcellularLocation>
        <location evidence="1">Cell inner membrane</location>
        <topology evidence="1">Multi-pass membrane protein</topology>
    </subcellularLocation>
</comment>
<comment type="similarity">
    <text evidence="1">Belongs to the peptidase M48B family.</text>
</comment>
<protein>
    <recommendedName>
        <fullName evidence="1">Protease HtpX</fullName>
        <ecNumber evidence="1">3.4.24.-</ecNumber>
    </recommendedName>
    <alternativeName>
        <fullName evidence="1">Heat shock protein HtpX</fullName>
    </alternativeName>
</protein>
<proteinExistence type="inferred from homology"/>